<dbReference type="EMBL" id="U79253">
    <property type="protein sequence ID" value="AAB50202.1"/>
    <property type="molecule type" value="mRNA"/>
</dbReference>
<dbReference type="EMBL" id="AY052377">
    <property type="protein sequence ID" value="AAL13058.1"/>
    <property type="molecule type" value="mRNA"/>
</dbReference>
<dbReference type="EMBL" id="AK290008">
    <property type="protein sequence ID" value="BAF82697.1"/>
    <property type="molecule type" value="mRNA"/>
</dbReference>
<dbReference type="EMBL" id="AL359397">
    <property type="status" value="NOT_ANNOTATED_CDS"/>
    <property type="molecule type" value="Genomic_DNA"/>
</dbReference>
<dbReference type="EMBL" id="CH471078">
    <property type="protein sequence ID" value="EAW65718.1"/>
    <property type="molecule type" value="Genomic_DNA"/>
</dbReference>
<dbReference type="EMBL" id="CH471078">
    <property type="protein sequence ID" value="EAW65722.1"/>
    <property type="molecule type" value="Genomic_DNA"/>
</dbReference>
<dbReference type="EMBL" id="BC011549">
    <property type="protein sequence ID" value="AAH11549.1"/>
    <property type="molecule type" value="mRNA"/>
</dbReference>
<dbReference type="CCDS" id="CCDS32075.2">
    <molecule id="Q99766-1"/>
</dbReference>
<dbReference type="CCDS" id="CCDS32076.2">
    <molecule id="Q99766-3"/>
</dbReference>
<dbReference type="CCDS" id="CCDS45102.2">
    <molecule id="Q99766-2"/>
</dbReference>
<dbReference type="RefSeq" id="NP_001003803.2">
    <molecule id="Q99766-1"/>
    <property type="nucleotide sequence ID" value="NM_001003803.3"/>
</dbReference>
<dbReference type="RefSeq" id="NP_001003805.2">
    <molecule id="Q99766-3"/>
    <property type="nucleotide sequence ID" value="NM_001003805.3"/>
</dbReference>
<dbReference type="RefSeq" id="NP_001357534.1">
    <molecule id="Q99766-1"/>
    <property type="nucleotide sequence ID" value="NM_001370605.1"/>
</dbReference>
<dbReference type="RefSeq" id="NP_001369436.1">
    <molecule id="Q99766-1"/>
    <property type="nucleotide sequence ID" value="NM_001382507.1"/>
</dbReference>
<dbReference type="RefSeq" id="NP_001369438.1">
    <molecule id="Q99766-1"/>
    <property type="nucleotide sequence ID" value="NM_001382509.1"/>
</dbReference>
<dbReference type="RefSeq" id="NP_056499.3">
    <molecule id="Q99766-2"/>
    <property type="nucleotide sequence ID" value="NM_015684.4"/>
</dbReference>
<dbReference type="RefSeq" id="XP_005267594.1">
    <molecule id="Q99766-1"/>
    <property type="nucleotide sequence ID" value="XM_005267537.5"/>
</dbReference>
<dbReference type="RefSeq" id="XP_011534955.1">
    <property type="nucleotide sequence ID" value="XM_011536653.2"/>
</dbReference>
<dbReference type="RefSeq" id="XP_011534959.1">
    <molecule id="Q99766-3"/>
    <property type="nucleotide sequence ID" value="XM_011536657.4"/>
</dbReference>
<dbReference type="RefSeq" id="XP_016876709.1">
    <property type="nucleotide sequence ID" value="XM_017021220.1"/>
</dbReference>
<dbReference type="RefSeq" id="XP_047287226.1">
    <molecule id="Q99766-1"/>
    <property type="nucleotide sequence ID" value="XM_047431270.1"/>
</dbReference>
<dbReference type="RefSeq" id="XP_047287227.1">
    <molecule id="Q99766-1"/>
    <property type="nucleotide sequence ID" value="XM_047431271.1"/>
</dbReference>
<dbReference type="RefSeq" id="XP_047287229.1">
    <molecule id="Q99766-2"/>
    <property type="nucleotide sequence ID" value="XM_047431273.1"/>
</dbReference>
<dbReference type="RefSeq" id="XP_047287230.1">
    <molecule id="Q99766-3"/>
    <property type="nucleotide sequence ID" value="XM_047431274.1"/>
</dbReference>
<dbReference type="SMR" id="Q99766"/>
<dbReference type="BioGRID" id="118006">
    <property type="interactions" value="22"/>
</dbReference>
<dbReference type="FunCoup" id="Q99766">
    <property type="interactions" value="1158"/>
</dbReference>
<dbReference type="IntAct" id="Q99766">
    <property type="interactions" value="18"/>
</dbReference>
<dbReference type="STRING" id="9606.ENSP00000451583"/>
<dbReference type="PhosphoSitePlus" id="Q99766"/>
<dbReference type="SwissPalm" id="Q99766"/>
<dbReference type="BioMuta" id="ATP5S"/>
<dbReference type="DMDM" id="313104249"/>
<dbReference type="jPOST" id="Q99766"/>
<dbReference type="MassIVE" id="Q99766"/>
<dbReference type="PaxDb" id="9606-ENSP00000308334"/>
<dbReference type="PeptideAtlas" id="Q99766"/>
<dbReference type="ProteomicsDB" id="78466">
    <molecule id="Q99766-1"/>
</dbReference>
<dbReference type="ProteomicsDB" id="78467">
    <molecule id="Q99766-2"/>
</dbReference>
<dbReference type="ProteomicsDB" id="78468">
    <molecule id="Q99766-3"/>
</dbReference>
<dbReference type="Pumba" id="Q99766"/>
<dbReference type="Antibodypedia" id="56666">
    <property type="antibodies" value="147 antibodies from 24 providers"/>
</dbReference>
<dbReference type="DNASU" id="27109"/>
<dbReference type="Ensembl" id="ENST00000245448.11">
    <molecule id="Q99766-3"/>
    <property type="protein sequence ID" value="ENSP00000245448.7"/>
    <property type="gene ID" value="ENSG00000125375.18"/>
</dbReference>
<dbReference type="Ensembl" id="ENST00000311459.12">
    <molecule id="Q99766-1"/>
    <property type="protein sequence ID" value="ENSP00000308334.8"/>
    <property type="gene ID" value="ENSG00000125375.18"/>
</dbReference>
<dbReference type="Ensembl" id="ENST00000426751.7">
    <molecule id="Q99766-2"/>
    <property type="protein sequence ID" value="ENSP00000389246.3"/>
    <property type="gene ID" value="ENSG00000125375.18"/>
</dbReference>
<dbReference type="Ensembl" id="ENST00000554204.7">
    <molecule id="Q99766-1"/>
    <property type="protein sequence ID" value="ENSP00000451583.3"/>
    <property type="gene ID" value="ENSG00000125375.18"/>
</dbReference>
<dbReference type="Ensembl" id="ENST00000554438.6">
    <molecule id="Q99766-1"/>
    <property type="protein sequence ID" value="ENSP00000509859.1"/>
    <property type="gene ID" value="ENSG00000125375.18"/>
</dbReference>
<dbReference type="Ensembl" id="ENST00000554951.6">
    <molecule id="Q99766-1"/>
    <property type="protein sequence ID" value="ENSP00000494641.2"/>
    <property type="gene ID" value="ENSG00000125375.18"/>
</dbReference>
<dbReference type="Ensembl" id="ENST00000557421.7">
    <molecule id="Q99766-1"/>
    <property type="protein sequence ID" value="ENSP00000506374.1"/>
    <property type="gene ID" value="ENSG00000125375.18"/>
</dbReference>
<dbReference type="Ensembl" id="ENST00000672419.1">
    <molecule id="Q99766-3"/>
    <property type="protein sequence ID" value="ENSP00000499920.1"/>
    <property type="gene ID" value="ENSG00000125375.18"/>
</dbReference>
<dbReference type="Ensembl" id="ENST00000672910.1">
    <molecule id="Q99766-3"/>
    <property type="protein sequence ID" value="ENSP00000500502.1"/>
    <property type="gene ID" value="ENSG00000125375.18"/>
</dbReference>
<dbReference type="GeneID" id="27109"/>
<dbReference type="KEGG" id="hsa:27109"/>
<dbReference type="MANE-Select" id="ENST00000557421.7">
    <property type="protein sequence ID" value="ENSP00000506374.1"/>
    <property type="RefSeq nucleotide sequence ID" value="NM_001382507.1"/>
    <property type="RefSeq protein sequence ID" value="NP_001369436.1"/>
</dbReference>
<dbReference type="UCSC" id="uc001wxv.4">
    <molecule id="Q99766-1"/>
    <property type="organism name" value="human"/>
</dbReference>
<dbReference type="AGR" id="HGNC:18799"/>
<dbReference type="CTD" id="27109"/>
<dbReference type="DisGeNET" id="27109"/>
<dbReference type="GeneCards" id="DMAC2L"/>
<dbReference type="HGNC" id="HGNC:18799">
    <property type="gene designation" value="DMAC2L"/>
</dbReference>
<dbReference type="HPA" id="ENSG00000125375">
    <property type="expression patterns" value="Low tissue specificity"/>
</dbReference>
<dbReference type="MalaCards" id="DMAC2L"/>
<dbReference type="MIM" id="618579">
    <property type="type" value="gene"/>
</dbReference>
<dbReference type="neXtProt" id="NX_Q99766"/>
<dbReference type="OpenTargets" id="ENSG00000125375"/>
<dbReference type="VEuPathDB" id="HostDB:ENSG00000125375"/>
<dbReference type="eggNOG" id="KOG3864">
    <property type="taxonomic scope" value="Eukaryota"/>
</dbReference>
<dbReference type="GeneTree" id="ENSGT00940000156502"/>
<dbReference type="HOGENOM" id="CLU_1969785_0_0_1"/>
<dbReference type="InParanoid" id="Q99766"/>
<dbReference type="OMA" id="IFDMLYV"/>
<dbReference type="OrthoDB" id="5859291at2759"/>
<dbReference type="PAN-GO" id="Q99766">
    <property type="GO annotations" value="1 GO annotation based on evolutionary models"/>
</dbReference>
<dbReference type="PhylomeDB" id="Q99766"/>
<dbReference type="TreeFam" id="TF315274"/>
<dbReference type="PathwayCommons" id="Q99766"/>
<dbReference type="Reactome" id="R-HSA-163210">
    <property type="pathway name" value="Formation of ATP by chemiosmotic coupling"/>
</dbReference>
<dbReference type="Reactome" id="R-HSA-8949613">
    <property type="pathway name" value="Cristae formation"/>
</dbReference>
<dbReference type="SignaLink" id="Q99766"/>
<dbReference type="BioGRID-ORCS" id="27109">
    <property type="hits" value="12 hits in 1149 CRISPR screens"/>
</dbReference>
<dbReference type="ChiTaRS" id="ATP5S">
    <property type="organism name" value="human"/>
</dbReference>
<dbReference type="GeneWiki" id="ATP5S"/>
<dbReference type="GenomeRNAi" id="27109"/>
<dbReference type="Pharos" id="Q99766">
    <property type="development level" value="Tbio"/>
</dbReference>
<dbReference type="PRO" id="PR:Q99766"/>
<dbReference type="Proteomes" id="UP000005640">
    <property type="component" value="Chromosome 14"/>
</dbReference>
<dbReference type="RNAct" id="Q99766">
    <property type="molecule type" value="protein"/>
</dbReference>
<dbReference type="Bgee" id="ENSG00000125375">
    <property type="expression patterns" value="Expressed in sperm and 207 other cell types or tissues"/>
</dbReference>
<dbReference type="ExpressionAtlas" id="Q99766">
    <property type="expression patterns" value="baseline and differential"/>
</dbReference>
<dbReference type="GO" id="GO:0005737">
    <property type="term" value="C:cytoplasm"/>
    <property type="evidence" value="ECO:0000318"/>
    <property type="project" value="GO_Central"/>
</dbReference>
<dbReference type="GO" id="GO:0005743">
    <property type="term" value="C:mitochondrial inner membrane"/>
    <property type="evidence" value="ECO:0000304"/>
    <property type="project" value="Reactome"/>
</dbReference>
<dbReference type="GO" id="GO:0005739">
    <property type="term" value="C:mitochondrion"/>
    <property type="evidence" value="ECO:0006056"/>
    <property type="project" value="FlyBase"/>
</dbReference>
<dbReference type="GO" id="GO:0045259">
    <property type="term" value="C:proton-transporting ATP synthase complex"/>
    <property type="evidence" value="ECO:0007669"/>
    <property type="project" value="UniProtKB-KW"/>
</dbReference>
<dbReference type="GO" id="GO:0046872">
    <property type="term" value="F:metal ion binding"/>
    <property type="evidence" value="ECO:0007669"/>
    <property type="project" value="UniProtKB-KW"/>
</dbReference>
<dbReference type="GO" id="GO:0015078">
    <property type="term" value="F:proton transmembrane transporter activity"/>
    <property type="evidence" value="ECO:0000303"/>
    <property type="project" value="UniProtKB"/>
</dbReference>
<dbReference type="GO" id="GO:0006754">
    <property type="term" value="P:ATP biosynthetic process"/>
    <property type="evidence" value="ECO:0007669"/>
    <property type="project" value="UniProtKB-KW"/>
</dbReference>
<dbReference type="GO" id="GO:1902600">
    <property type="term" value="P:proton transmembrane transport"/>
    <property type="evidence" value="ECO:0000303"/>
    <property type="project" value="UniProtKB"/>
</dbReference>
<dbReference type="FunFam" id="3.80.10.10:FF:000216">
    <property type="entry name" value="ATP synthase subunit s, mitochondrial isoform X1"/>
    <property type="match status" value="1"/>
</dbReference>
<dbReference type="Gene3D" id="3.80.10.10">
    <property type="entry name" value="Ribonuclease Inhibitor"/>
    <property type="match status" value="1"/>
</dbReference>
<dbReference type="InterPro" id="IPR032675">
    <property type="entry name" value="LRR_dom_sf"/>
</dbReference>
<dbReference type="SUPFAM" id="SSF52047">
    <property type="entry name" value="RNI-like"/>
    <property type="match status" value="1"/>
</dbReference>
<protein>
    <recommendedName>
        <fullName evidence="9">ATP synthase subunit s, mitochondrial</fullName>
    </recommendedName>
    <alternativeName>
        <fullName>ATP synthase-coupling factor B</fullName>
        <shortName>FB</shortName>
    </alternativeName>
    <alternativeName>
        <fullName evidence="10">Distal membrane arm assembly complex 2-like protein</fullName>
    </alternativeName>
    <alternativeName>
        <fullName>Mitochondrial ATP synthase regulatory component factor B</fullName>
    </alternativeName>
</protein>
<gene>
    <name evidence="10" type="primary">DMAC2L</name>
    <name evidence="10" type="synonym">ATP5S</name>
    <name type="synonym">ATPW</name>
</gene>
<organism>
    <name type="scientific">Homo sapiens</name>
    <name type="common">Human</name>
    <dbReference type="NCBI Taxonomy" id="9606"/>
    <lineage>
        <taxon>Eukaryota</taxon>
        <taxon>Metazoa</taxon>
        <taxon>Chordata</taxon>
        <taxon>Craniata</taxon>
        <taxon>Vertebrata</taxon>
        <taxon>Euteleostomi</taxon>
        <taxon>Mammalia</taxon>
        <taxon>Eutheria</taxon>
        <taxon>Euarchontoglires</taxon>
        <taxon>Primates</taxon>
        <taxon>Haplorrhini</taxon>
        <taxon>Catarrhini</taxon>
        <taxon>Hominidae</taxon>
        <taxon>Homo</taxon>
    </lineage>
</organism>
<evidence type="ECO:0000250" key="1">
    <source>
        <dbReference type="UniProtKB" id="P22027"/>
    </source>
</evidence>
<evidence type="ECO:0000269" key="2">
    <source>
    </source>
</evidence>
<evidence type="ECO:0000269" key="3">
    <source>
    </source>
</evidence>
<evidence type="ECO:0000269" key="4">
    <source>
    </source>
</evidence>
<evidence type="ECO:0000269" key="5">
    <source>
    </source>
</evidence>
<evidence type="ECO:0000269" key="6">
    <source ref="5"/>
</evidence>
<evidence type="ECO:0000303" key="7">
    <source>
    </source>
</evidence>
<evidence type="ECO:0000303" key="8">
    <source>
    </source>
</evidence>
<evidence type="ECO:0000305" key="9"/>
<evidence type="ECO:0000312" key="10">
    <source>
        <dbReference type="HGNC" id="HGNC:18799"/>
    </source>
</evidence>
<sequence length="200" mass="23226">MMPFGKISQQLCGVKKLPWSCDSRYFWGWLNAVFNKVDYDRIRDVGPDRAASEWLLRCGAMVRYHGQERWQKDYNHLPTGPLDKYKIQAIDATDSCIMSIGFDHMEGLEHVEKIRLCKCHYIEDDCLLRLSQLENLQKTILEMEIISCGNITDKGIIALRHLRNLKYLLLSDLPGVREKENLVQAFKTALPSLELKLQLK</sequence>
<keyword id="KW-0025">Alternative splicing</keyword>
<keyword id="KW-0066">ATP synthesis</keyword>
<keyword id="KW-0138">CF(0)</keyword>
<keyword id="KW-0903">Direct protein sequencing</keyword>
<keyword id="KW-0375">Hydrogen ion transport</keyword>
<keyword id="KW-0406">Ion transport</keyword>
<keyword id="KW-0433">Leucine-rich repeat</keyword>
<keyword id="KW-0460">Magnesium</keyword>
<keyword id="KW-0472">Membrane</keyword>
<keyword id="KW-0479">Metal-binding</keyword>
<keyword id="KW-0496">Mitochondrion</keyword>
<keyword id="KW-0999">Mitochondrion inner membrane</keyword>
<keyword id="KW-1267">Proteomics identification</keyword>
<keyword id="KW-1185">Reference proteome</keyword>
<keyword id="KW-0677">Repeat</keyword>
<keyword id="KW-0809">Transit peptide</keyword>
<keyword id="KW-0813">Transport</keyword>
<reference key="1">
    <citation type="journal article" date="1997" name="Genome Res.">
        <title>Large-scale concatenation cDNA sequencing.</title>
        <authorList>
            <person name="Yu W."/>
            <person name="Andersson B."/>
            <person name="Worley K.C."/>
            <person name="Muzny D.M."/>
            <person name="Ding Y."/>
            <person name="Liu W."/>
            <person name="Ricafrente J.Y."/>
            <person name="Wentland M.A."/>
            <person name="Lennon G."/>
            <person name="Gibbs R.A."/>
        </authorList>
    </citation>
    <scope>NUCLEOTIDE SEQUENCE [LARGE SCALE MRNA] (ISOFORM 2)</scope>
    <scope>VARIANT LEU-3</scope>
    <source>
        <tissue>Brain</tissue>
    </source>
</reference>
<reference key="2">
    <citation type="journal article" date="2002" name="J. Biol. Chem.">
        <title>Factor B and the mitochondrial ATP synthase complex.</title>
        <authorList>
            <person name="Belogrudov G.I."/>
            <person name="Hatefi Y."/>
        </authorList>
    </citation>
    <scope>NUCLEOTIDE SEQUENCE [MRNA] (ISOFORM 1)</scope>
    <scope>PARTIAL PROTEIN SEQUENCE</scope>
    <scope>SUBUNIT</scope>
    <scope>VARIANT LEU-3</scope>
</reference>
<reference key="3">
    <citation type="journal article" date="2004" name="Nat. Genet.">
        <title>Complete sequencing and characterization of 21,243 full-length human cDNAs.</title>
        <authorList>
            <person name="Ota T."/>
            <person name="Suzuki Y."/>
            <person name="Nishikawa T."/>
            <person name="Otsuki T."/>
            <person name="Sugiyama T."/>
            <person name="Irie R."/>
            <person name="Wakamatsu A."/>
            <person name="Hayashi K."/>
            <person name="Sato H."/>
            <person name="Nagai K."/>
            <person name="Kimura K."/>
            <person name="Makita H."/>
            <person name="Sekine M."/>
            <person name="Obayashi M."/>
            <person name="Nishi T."/>
            <person name="Shibahara T."/>
            <person name="Tanaka T."/>
            <person name="Ishii S."/>
            <person name="Yamamoto J."/>
            <person name="Saito K."/>
            <person name="Kawai Y."/>
            <person name="Isono Y."/>
            <person name="Nakamura Y."/>
            <person name="Nagahari K."/>
            <person name="Murakami K."/>
            <person name="Yasuda T."/>
            <person name="Iwayanagi T."/>
            <person name="Wagatsuma M."/>
            <person name="Shiratori A."/>
            <person name="Sudo H."/>
            <person name="Hosoiri T."/>
            <person name="Kaku Y."/>
            <person name="Kodaira H."/>
            <person name="Kondo H."/>
            <person name="Sugawara M."/>
            <person name="Takahashi M."/>
            <person name="Kanda K."/>
            <person name="Yokoi T."/>
            <person name="Furuya T."/>
            <person name="Kikkawa E."/>
            <person name="Omura Y."/>
            <person name="Abe K."/>
            <person name="Kamihara K."/>
            <person name="Katsuta N."/>
            <person name="Sato K."/>
            <person name="Tanikawa M."/>
            <person name="Yamazaki M."/>
            <person name="Ninomiya K."/>
            <person name="Ishibashi T."/>
            <person name="Yamashita H."/>
            <person name="Murakawa K."/>
            <person name="Fujimori K."/>
            <person name="Tanai H."/>
            <person name="Kimata M."/>
            <person name="Watanabe M."/>
            <person name="Hiraoka S."/>
            <person name="Chiba Y."/>
            <person name="Ishida S."/>
            <person name="Ono Y."/>
            <person name="Takiguchi S."/>
            <person name="Watanabe S."/>
            <person name="Yosida M."/>
            <person name="Hotuta T."/>
            <person name="Kusano J."/>
            <person name="Kanehori K."/>
            <person name="Takahashi-Fujii A."/>
            <person name="Hara H."/>
            <person name="Tanase T.-O."/>
            <person name="Nomura Y."/>
            <person name="Togiya S."/>
            <person name="Komai F."/>
            <person name="Hara R."/>
            <person name="Takeuchi K."/>
            <person name="Arita M."/>
            <person name="Imose N."/>
            <person name="Musashino K."/>
            <person name="Yuuki H."/>
            <person name="Oshima A."/>
            <person name="Sasaki N."/>
            <person name="Aotsuka S."/>
            <person name="Yoshikawa Y."/>
            <person name="Matsunawa H."/>
            <person name="Ichihara T."/>
            <person name="Shiohata N."/>
            <person name="Sano S."/>
            <person name="Moriya S."/>
            <person name="Momiyama H."/>
            <person name="Satoh N."/>
            <person name="Takami S."/>
            <person name="Terashima Y."/>
            <person name="Suzuki O."/>
            <person name="Nakagawa S."/>
            <person name="Senoh A."/>
            <person name="Mizoguchi H."/>
            <person name="Goto Y."/>
            <person name="Shimizu F."/>
            <person name="Wakebe H."/>
            <person name="Hishigaki H."/>
            <person name="Watanabe T."/>
            <person name="Sugiyama A."/>
            <person name="Takemoto M."/>
            <person name="Kawakami B."/>
            <person name="Yamazaki M."/>
            <person name="Watanabe K."/>
            <person name="Kumagai A."/>
            <person name="Itakura S."/>
            <person name="Fukuzumi Y."/>
            <person name="Fujimori Y."/>
            <person name="Komiyama M."/>
            <person name="Tashiro H."/>
            <person name="Tanigami A."/>
            <person name="Fujiwara T."/>
            <person name="Ono T."/>
            <person name="Yamada K."/>
            <person name="Fujii Y."/>
            <person name="Ozaki K."/>
            <person name="Hirao M."/>
            <person name="Ohmori Y."/>
            <person name="Kawabata A."/>
            <person name="Hikiji T."/>
            <person name="Kobatake N."/>
            <person name="Inagaki H."/>
            <person name="Ikema Y."/>
            <person name="Okamoto S."/>
            <person name="Okitani R."/>
            <person name="Kawakami T."/>
            <person name="Noguchi S."/>
            <person name="Itoh T."/>
            <person name="Shigeta K."/>
            <person name="Senba T."/>
            <person name="Matsumura K."/>
            <person name="Nakajima Y."/>
            <person name="Mizuno T."/>
            <person name="Morinaga M."/>
            <person name="Sasaki M."/>
            <person name="Togashi T."/>
            <person name="Oyama M."/>
            <person name="Hata H."/>
            <person name="Watanabe M."/>
            <person name="Komatsu T."/>
            <person name="Mizushima-Sugano J."/>
            <person name="Satoh T."/>
            <person name="Shirai Y."/>
            <person name="Takahashi Y."/>
            <person name="Nakagawa K."/>
            <person name="Okumura K."/>
            <person name="Nagase T."/>
            <person name="Nomura N."/>
            <person name="Kikuchi H."/>
            <person name="Masuho Y."/>
            <person name="Yamashita R."/>
            <person name="Nakai K."/>
            <person name="Yada T."/>
            <person name="Nakamura Y."/>
            <person name="Ohara O."/>
            <person name="Isogai T."/>
            <person name="Sugano S."/>
        </authorList>
    </citation>
    <scope>NUCLEOTIDE SEQUENCE [LARGE SCALE MRNA] (ISOFORM 1)</scope>
    <scope>VARIANT LEU-3</scope>
    <source>
        <tissue>Hippocampus</tissue>
    </source>
</reference>
<reference key="4">
    <citation type="journal article" date="2003" name="Nature">
        <title>The DNA sequence and analysis of human chromosome 14.</title>
        <authorList>
            <person name="Heilig R."/>
            <person name="Eckenberg R."/>
            <person name="Petit J.-L."/>
            <person name="Fonknechten N."/>
            <person name="Da Silva C."/>
            <person name="Cattolico L."/>
            <person name="Levy M."/>
            <person name="Barbe V."/>
            <person name="De Berardinis V."/>
            <person name="Ureta-Vidal A."/>
            <person name="Pelletier E."/>
            <person name="Vico V."/>
            <person name="Anthouard V."/>
            <person name="Rowen L."/>
            <person name="Madan A."/>
            <person name="Qin S."/>
            <person name="Sun H."/>
            <person name="Du H."/>
            <person name="Pepin K."/>
            <person name="Artiguenave F."/>
            <person name="Robert C."/>
            <person name="Cruaud C."/>
            <person name="Bruels T."/>
            <person name="Jaillon O."/>
            <person name="Friedlander L."/>
            <person name="Samson G."/>
            <person name="Brottier P."/>
            <person name="Cure S."/>
            <person name="Segurens B."/>
            <person name="Aniere F."/>
            <person name="Samain S."/>
            <person name="Crespeau H."/>
            <person name="Abbasi N."/>
            <person name="Aiach N."/>
            <person name="Boscus D."/>
            <person name="Dickhoff R."/>
            <person name="Dors M."/>
            <person name="Dubois I."/>
            <person name="Friedman C."/>
            <person name="Gouyvenoux M."/>
            <person name="James R."/>
            <person name="Madan A."/>
            <person name="Mairey-Estrada B."/>
            <person name="Mangenot S."/>
            <person name="Martins N."/>
            <person name="Menard M."/>
            <person name="Oztas S."/>
            <person name="Ratcliffe A."/>
            <person name="Shaffer T."/>
            <person name="Trask B."/>
            <person name="Vacherie B."/>
            <person name="Bellemere C."/>
            <person name="Belser C."/>
            <person name="Besnard-Gonnet M."/>
            <person name="Bartol-Mavel D."/>
            <person name="Boutard M."/>
            <person name="Briez-Silla S."/>
            <person name="Combette S."/>
            <person name="Dufosse-Laurent V."/>
            <person name="Ferron C."/>
            <person name="Lechaplais C."/>
            <person name="Louesse C."/>
            <person name="Muselet D."/>
            <person name="Magdelenat G."/>
            <person name="Pateau E."/>
            <person name="Petit E."/>
            <person name="Sirvain-Trukniewicz P."/>
            <person name="Trybou A."/>
            <person name="Vega-Czarny N."/>
            <person name="Bataille E."/>
            <person name="Bluet E."/>
            <person name="Bordelais I."/>
            <person name="Dubois M."/>
            <person name="Dumont C."/>
            <person name="Guerin T."/>
            <person name="Haffray S."/>
            <person name="Hammadi R."/>
            <person name="Muanga J."/>
            <person name="Pellouin V."/>
            <person name="Robert D."/>
            <person name="Wunderle E."/>
            <person name="Gauguet G."/>
            <person name="Roy A."/>
            <person name="Sainte-Marthe L."/>
            <person name="Verdier J."/>
            <person name="Verdier-Discala C."/>
            <person name="Hillier L.W."/>
            <person name="Fulton L."/>
            <person name="McPherson J."/>
            <person name="Matsuda F."/>
            <person name="Wilson R."/>
            <person name="Scarpelli C."/>
            <person name="Gyapay G."/>
            <person name="Wincker P."/>
            <person name="Saurin W."/>
            <person name="Quetier F."/>
            <person name="Waterston R."/>
            <person name="Hood L."/>
            <person name="Weissenbach J."/>
        </authorList>
    </citation>
    <scope>NUCLEOTIDE SEQUENCE [LARGE SCALE GENOMIC DNA]</scope>
</reference>
<reference key="5">
    <citation type="submission" date="2005-09" db="EMBL/GenBank/DDBJ databases">
        <authorList>
            <person name="Mural R.J."/>
            <person name="Istrail S."/>
            <person name="Sutton G.G."/>
            <person name="Florea L."/>
            <person name="Halpern A.L."/>
            <person name="Mobarry C.M."/>
            <person name="Lippert R."/>
            <person name="Walenz B."/>
            <person name="Shatkay H."/>
            <person name="Dew I."/>
            <person name="Miller J.R."/>
            <person name="Flanigan M.J."/>
            <person name="Edwards N.J."/>
            <person name="Bolanos R."/>
            <person name="Fasulo D."/>
            <person name="Halldorsson B.V."/>
            <person name="Hannenhalli S."/>
            <person name="Turner R."/>
            <person name="Yooseph S."/>
            <person name="Lu F."/>
            <person name="Nusskern D.R."/>
            <person name="Shue B.C."/>
            <person name="Zheng X.H."/>
            <person name="Zhong F."/>
            <person name="Delcher A.L."/>
            <person name="Huson D.H."/>
            <person name="Kravitz S.A."/>
            <person name="Mouchard L."/>
            <person name="Reinert K."/>
            <person name="Remington K.A."/>
            <person name="Clark A.G."/>
            <person name="Waterman M.S."/>
            <person name="Eichler E.E."/>
            <person name="Adams M.D."/>
            <person name="Hunkapiller M.W."/>
            <person name="Myers E.W."/>
            <person name="Venter J.C."/>
        </authorList>
    </citation>
    <scope>NUCLEOTIDE SEQUENCE [LARGE SCALE GENOMIC DNA]</scope>
    <scope>VARIANT LEU-3</scope>
</reference>
<reference key="6">
    <citation type="journal article" date="2004" name="Genome Res.">
        <title>The status, quality, and expansion of the NIH full-length cDNA project: the Mammalian Gene Collection (MGC).</title>
        <authorList>
            <consortium name="The MGC Project Team"/>
        </authorList>
    </citation>
    <scope>NUCLEOTIDE SEQUENCE [LARGE SCALE MRNA] (ISOFORM 3)</scope>
    <scope>VARIANT LEU-3</scope>
    <source>
        <tissue>Uterus</tissue>
    </source>
</reference>
<reference key="7">
    <citation type="journal article" date="2011" name="BMC Syst. Biol.">
        <title>Initial characterization of the human central proteome.</title>
        <authorList>
            <person name="Burkard T.R."/>
            <person name="Planyavsky M."/>
            <person name="Kaupe I."/>
            <person name="Breitwieser F.P."/>
            <person name="Buerckstuemmer T."/>
            <person name="Bennett K.L."/>
            <person name="Superti-Furga G."/>
            <person name="Colinge J."/>
        </authorList>
    </citation>
    <scope>IDENTIFICATION BY MASS SPECTROMETRY [LARGE SCALE ANALYSIS]</scope>
</reference>
<reference key="8">
    <citation type="journal article" date="2015" name="Proteomics">
        <title>N-terminome analysis of the human mitochondrial proteome.</title>
        <authorList>
            <person name="Vaca Jacome A.S."/>
            <person name="Rabilloud T."/>
            <person name="Schaeffer-Reiss C."/>
            <person name="Rompais M."/>
            <person name="Ayoub D."/>
            <person name="Lane L."/>
            <person name="Bairoch A."/>
            <person name="Van Dorsselaer A."/>
            <person name="Carapito C."/>
        </authorList>
    </citation>
    <scope>IDENTIFICATION BY MASS SPECTROMETRY [LARGE SCALE ANALYSIS]</scope>
</reference>
<comment type="function">
    <text evidence="1">Involved in regulation of mitochondrial membrane ATP synthase. Necessary for H(+) conduction of ATP synthase. Facilitates energy-driven catalysis of ATP synthesis by blocking a proton leak through an alternative proton exit pathway.</text>
</comment>
<comment type="subunit">
    <text evidence="1">Homotetramer. Associates with ATP synthase.</text>
</comment>
<comment type="interaction">
    <interactant intactId="EBI-13309711">
        <id>Q99766-3</id>
    </interactant>
    <interactant intactId="EBI-17280301">
        <id>Q03828</id>
        <label>EVX2</label>
    </interactant>
    <organismsDiffer>false</organismsDiffer>
    <experiments>3</experiments>
</comment>
<comment type="interaction">
    <interactant intactId="EBI-13309711">
        <id>Q99766-3</id>
    </interactant>
    <interactant intactId="EBI-6426443">
        <id>Q2WGJ6</id>
        <label>KLHL38</label>
    </interactant>
    <organismsDiffer>false</organismsDiffer>
    <experiments>3</experiments>
</comment>
<comment type="subcellular location">
    <subcellularLocation>
        <location evidence="1">Mitochondrion</location>
    </subcellularLocation>
    <subcellularLocation>
        <location evidence="1">Mitochondrion inner membrane</location>
    </subcellularLocation>
</comment>
<comment type="alternative products">
    <event type="alternative splicing"/>
    <isoform>
        <id>Q99766-1</id>
        <name>1</name>
        <sequence type="displayed"/>
    </isoform>
    <isoform>
        <id>Q99766-2</id>
        <name>2</name>
        <sequence type="described" ref="VSP_040059 VSP_040062"/>
    </isoform>
    <isoform>
        <id>Q99766-3</id>
        <name>3</name>
        <sequence type="described" ref="VSP_040060 VSP_040061"/>
    </isoform>
</comment>
<comment type="similarity">
    <text evidence="9">Belongs to the ATP synthase subunit s family.</text>
</comment>
<accession>Q99766</accession>
<accession>A0A2R8YDJ1</accession>
<accession>A0A5K1VW60</accession>
<accession>A8K1U3</accession>
<accession>D9N156</accession>
<accession>Q8WWX3</accession>
<accession>Q96F77</accession>
<proteinExistence type="evidence at protein level"/>
<feature type="transit peptide" description="Mitochondrion" evidence="1">
    <location>
        <begin position="1"/>
        <end position="25"/>
    </location>
</feature>
<feature type="chain" id="PRO_0000002538" description="ATP synthase subunit s, mitochondrial">
    <location>
        <begin position="26"/>
        <end position="200"/>
    </location>
</feature>
<feature type="repeat" description="LRR 1" evidence="1">
    <location>
        <begin position="62"/>
        <end position="87"/>
    </location>
</feature>
<feature type="repeat" description="LRR 2" evidence="1">
    <location>
        <begin position="88"/>
        <end position="116"/>
    </location>
</feature>
<feature type="repeat" description="LRR 3" evidence="1">
    <location>
        <begin position="117"/>
        <end position="141"/>
    </location>
</feature>
<feature type="repeat" description="LRR 4" evidence="1">
    <location>
        <begin position="142"/>
        <end position="173"/>
    </location>
</feature>
<feature type="region of interest" description="N-terminal domain" evidence="1">
    <location>
        <begin position="1"/>
        <end position="61"/>
    </location>
</feature>
<feature type="binding site" evidence="1">
    <location>
        <position position="59"/>
    </location>
    <ligand>
        <name>Mg(2+)</name>
        <dbReference type="ChEBI" id="CHEBI:18420"/>
    </ligand>
</feature>
<feature type="binding site" evidence="1">
    <location>
        <position position="93"/>
    </location>
    <ligand>
        <name>Mg(2+)</name>
        <dbReference type="ChEBI" id="CHEBI:18420"/>
    </ligand>
</feature>
<feature type="splice variant" id="VSP_040059" description="In isoform 2." evidence="8">
    <original>EGLEHVEKIRLCKCHY</original>
    <variation>GNYPIVLLIENADDLQ</variation>
    <location>
        <begin position="106"/>
        <end position="121"/>
    </location>
</feature>
<feature type="splice variant" id="VSP_040060" description="In isoform 3." evidence="7">
    <original>GLEHVE</original>
    <variation>TSNICC</variation>
    <location>
        <begin position="107"/>
        <end position="112"/>
    </location>
</feature>
<feature type="splice variant" id="VSP_040061" description="In isoform 3." evidence="7">
    <location>
        <begin position="113"/>
        <end position="200"/>
    </location>
</feature>
<feature type="splice variant" id="VSP_040062" description="In isoform 2." evidence="8">
    <location>
        <begin position="122"/>
        <end position="200"/>
    </location>
</feature>
<feature type="sequence variant" id="VAR_060296" description="In dbSNP:rs2275592." evidence="2 3 4 5 6">
    <original>P</original>
    <variation>L</variation>
    <location>
        <position position="3"/>
    </location>
</feature>
<name>ATP5S_HUMAN</name>